<accession>Q6D3B4</accession>
<keyword id="KW-0378">Hydrolase</keyword>
<keyword id="KW-0479">Metal-binding</keyword>
<keyword id="KW-1185">Reference proteome</keyword>
<keyword id="KW-0862">Zinc</keyword>
<comment type="function">
    <text evidence="1">This enzyme scavenges exogenous and endogenous cytidine and 2'-deoxycytidine for UMP synthesis.</text>
</comment>
<comment type="catalytic activity">
    <reaction evidence="1">
        <text>cytidine + H2O + H(+) = uridine + NH4(+)</text>
        <dbReference type="Rhea" id="RHEA:16069"/>
        <dbReference type="ChEBI" id="CHEBI:15377"/>
        <dbReference type="ChEBI" id="CHEBI:15378"/>
        <dbReference type="ChEBI" id="CHEBI:16704"/>
        <dbReference type="ChEBI" id="CHEBI:17562"/>
        <dbReference type="ChEBI" id="CHEBI:28938"/>
        <dbReference type="EC" id="3.5.4.5"/>
    </reaction>
</comment>
<comment type="catalytic activity">
    <reaction evidence="1">
        <text>2'-deoxycytidine + H2O + H(+) = 2'-deoxyuridine + NH4(+)</text>
        <dbReference type="Rhea" id="RHEA:13433"/>
        <dbReference type="ChEBI" id="CHEBI:15377"/>
        <dbReference type="ChEBI" id="CHEBI:15378"/>
        <dbReference type="ChEBI" id="CHEBI:15698"/>
        <dbReference type="ChEBI" id="CHEBI:16450"/>
        <dbReference type="ChEBI" id="CHEBI:28938"/>
        <dbReference type="EC" id="3.5.4.5"/>
    </reaction>
</comment>
<comment type="cofactor">
    <cofactor evidence="1">
        <name>Zn(2+)</name>
        <dbReference type="ChEBI" id="CHEBI:29105"/>
    </cofactor>
    <text evidence="1">Binds 1 zinc ion.</text>
</comment>
<comment type="subunit">
    <text evidence="1">Homodimer.</text>
</comment>
<comment type="similarity">
    <text evidence="1">Belongs to the cytidine and deoxycytidylate deaminase family.</text>
</comment>
<protein>
    <recommendedName>
        <fullName evidence="1">Cytidine deaminase</fullName>
        <ecNumber evidence="1">3.5.4.5</ecNumber>
    </recommendedName>
    <alternativeName>
        <fullName evidence="1">Cytidine aminohydrolase</fullName>
        <shortName evidence="1">CDA</shortName>
    </alternativeName>
</protein>
<proteinExistence type="inferred from homology"/>
<feature type="chain" id="PRO_0000171648" description="Cytidine deaminase">
    <location>
        <begin position="1"/>
        <end position="296"/>
    </location>
</feature>
<feature type="domain" description="CMP/dCMP-type deaminase 1" evidence="2">
    <location>
        <begin position="48"/>
        <end position="168"/>
    </location>
</feature>
<feature type="domain" description="CMP/dCMP-type deaminase 2" evidence="2">
    <location>
        <begin position="187"/>
        <end position="296"/>
    </location>
</feature>
<feature type="active site" description="Proton donor" evidence="1">
    <location>
        <position position="104"/>
    </location>
</feature>
<feature type="binding site" evidence="1">
    <location>
        <begin position="89"/>
        <end position="91"/>
    </location>
    <ligand>
        <name>substrate</name>
    </ligand>
</feature>
<feature type="binding site" evidence="1">
    <location>
        <position position="102"/>
    </location>
    <ligand>
        <name>Zn(2+)</name>
        <dbReference type="ChEBI" id="CHEBI:29105"/>
        <note>catalytic</note>
    </ligand>
</feature>
<feature type="binding site" evidence="1">
    <location>
        <position position="129"/>
    </location>
    <ligand>
        <name>Zn(2+)</name>
        <dbReference type="ChEBI" id="CHEBI:29105"/>
        <note>catalytic</note>
    </ligand>
</feature>
<feature type="binding site" evidence="1">
    <location>
        <position position="132"/>
    </location>
    <ligand>
        <name>Zn(2+)</name>
        <dbReference type="ChEBI" id="CHEBI:29105"/>
        <note>catalytic</note>
    </ligand>
</feature>
<reference key="1">
    <citation type="journal article" date="2004" name="Proc. Natl. Acad. Sci. U.S.A.">
        <title>Genome sequence of the enterobacterial phytopathogen Erwinia carotovora subsp. atroseptica and characterization of virulence factors.</title>
        <authorList>
            <person name="Bell K.S."/>
            <person name="Sebaihia M."/>
            <person name="Pritchard L."/>
            <person name="Holden M.T.G."/>
            <person name="Hyman L.J."/>
            <person name="Holeva M.C."/>
            <person name="Thomson N.R."/>
            <person name="Bentley S.D."/>
            <person name="Churcher L.J.C."/>
            <person name="Mungall K."/>
            <person name="Atkin R."/>
            <person name="Bason N."/>
            <person name="Brooks K."/>
            <person name="Chillingworth T."/>
            <person name="Clark K."/>
            <person name="Doggett J."/>
            <person name="Fraser A."/>
            <person name="Hance Z."/>
            <person name="Hauser H."/>
            <person name="Jagels K."/>
            <person name="Moule S."/>
            <person name="Norbertczak H."/>
            <person name="Ormond D."/>
            <person name="Price C."/>
            <person name="Quail M.A."/>
            <person name="Sanders M."/>
            <person name="Walker D."/>
            <person name="Whitehead S."/>
            <person name="Salmond G.P.C."/>
            <person name="Birch P.R.J."/>
            <person name="Parkhill J."/>
            <person name="Toth I.K."/>
        </authorList>
    </citation>
    <scope>NUCLEOTIDE SEQUENCE [LARGE SCALE GENOMIC DNA]</scope>
    <source>
        <strain>SCRI 1043 / ATCC BAA-672</strain>
    </source>
</reference>
<name>CDD_PECAS</name>
<gene>
    <name evidence="1" type="primary">cdd</name>
    <name type="ordered locus">ECA2830</name>
</gene>
<evidence type="ECO:0000255" key="1">
    <source>
        <dbReference type="HAMAP-Rule" id="MF_01558"/>
    </source>
</evidence>
<evidence type="ECO:0000255" key="2">
    <source>
        <dbReference type="PROSITE-ProRule" id="PRU01083"/>
    </source>
</evidence>
<organism>
    <name type="scientific">Pectobacterium atrosepticum (strain SCRI 1043 / ATCC BAA-672)</name>
    <name type="common">Erwinia carotovora subsp. atroseptica</name>
    <dbReference type="NCBI Taxonomy" id="218491"/>
    <lineage>
        <taxon>Bacteria</taxon>
        <taxon>Pseudomonadati</taxon>
        <taxon>Pseudomonadota</taxon>
        <taxon>Gammaproteobacteria</taxon>
        <taxon>Enterobacterales</taxon>
        <taxon>Pectobacteriaceae</taxon>
        <taxon>Pectobacterium</taxon>
    </lineage>
</organism>
<sequence>MHTRFENAFQQLSASLQDALGPLIDKPDFAAMLTADEVNAVCEASQLDVDALAFALLPLAAACAQASISNFQVGAIAQGLSGNFYFGANMEFTAVQLQQTVHAEQSAVSHAWLRNERGLRAVTVNYTPCGHCRQFMNELRNAASLRIQLPGRQPAVLSHYLPDAFGPVDLQIDTLLMDDINHGATLQNVNALTRQALDAANRSHAPYSKAISGIALETASGNIYTGRYAENAAFNPSLPPLQAALNLMNLAGEDPSTIKYAAVVERRNAVVSHWAISQIMLAELGCTDVEHHFIEE</sequence>
<dbReference type="EC" id="3.5.4.5" evidence="1"/>
<dbReference type="EMBL" id="BX950851">
    <property type="protein sequence ID" value="CAG75730.1"/>
    <property type="molecule type" value="Genomic_DNA"/>
</dbReference>
<dbReference type="RefSeq" id="WP_011094364.1">
    <property type="nucleotide sequence ID" value="NC_004547.2"/>
</dbReference>
<dbReference type="SMR" id="Q6D3B4"/>
<dbReference type="STRING" id="218491.ECA2830"/>
<dbReference type="GeneID" id="57208481"/>
<dbReference type="KEGG" id="eca:ECA2830"/>
<dbReference type="PATRIC" id="fig|218491.5.peg.2871"/>
<dbReference type="eggNOG" id="COG0295">
    <property type="taxonomic scope" value="Bacteria"/>
</dbReference>
<dbReference type="HOGENOM" id="CLU_052424_0_0_6"/>
<dbReference type="OrthoDB" id="9795347at2"/>
<dbReference type="Proteomes" id="UP000007966">
    <property type="component" value="Chromosome"/>
</dbReference>
<dbReference type="GO" id="GO:0005829">
    <property type="term" value="C:cytosol"/>
    <property type="evidence" value="ECO:0007669"/>
    <property type="project" value="TreeGrafter"/>
</dbReference>
<dbReference type="GO" id="GO:0004126">
    <property type="term" value="F:cytidine deaminase activity"/>
    <property type="evidence" value="ECO:0007669"/>
    <property type="project" value="UniProtKB-UniRule"/>
</dbReference>
<dbReference type="GO" id="GO:0042802">
    <property type="term" value="F:identical protein binding"/>
    <property type="evidence" value="ECO:0007669"/>
    <property type="project" value="UniProtKB-ARBA"/>
</dbReference>
<dbReference type="GO" id="GO:0008270">
    <property type="term" value="F:zinc ion binding"/>
    <property type="evidence" value="ECO:0007669"/>
    <property type="project" value="UniProtKB-UniRule"/>
</dbReference>
<dbReference type="GO" id="GO:0009972">
    <property type="term" value="P:cytidine deamination"/>
    <property type="evidence" value="ECO:0007669"/>
    <property type="project" value="InterPro"/>
</dbReference>
<dbReference type="CDD" id="cd01283">
    <property type="entry name" value="cytidine_deaminase"/>
    <property type="match status" value="2"/>
</dbReference>
<dbReference type="FunFam" id="3.40.140.10:FF:000007">
    <property type="entry name" value="Cytidine deaminase"/>
    <property type="match status" value="1"/>
</dbReference>
<dbReference type="Gene3D" id="3.40.140.10">
    <property type="entry name" value="Cytidine Deaminase, domain 2"/>
    <property type="match status" value="2"/>
</dbReference>
<dbReference type="HAMAP" id="MF_01558">
    <property type="entry name" value="Cyt_deam"/>
    <property type="match status" value="1"/>
</dbReference>
<dbReference type="InterPro" id="IPR016192">
    <property type="entry name" value="APOBEC/CMP_deaminase_Zn-bd"/>
</dbReference>
<dbReference type="InterPro" id="IPR002125">
    <property type="entry name" value="CMP_dCMP_dom"/>
</dbReference>
<dbReference type="InterPro" id="IPR013171">
    <property type="entry name" value="Cyd/dCyd_deaminase_Zn-bd"/>
</dbReference>
<dbReference type="InterPro" id="IPR050202">
    <property type="entry name" value="Cyt/Deoxycyt_deaminase"/>
</dbReference>
<dbReference type="InterPro" id="IPR006263">
    <property type="entry name" value="Cyt_deam_dimer"/>
</dbReference>
<dbReference type="InterPro" id="IPR016193">
    <property type="entry name" value="Cytidine_deaminase-like"/>
</dbReference>
<dbReference type="InterPro" id="IPR020797">
    <property type="entry name" value="Cytidine_deaminase_bacteria"/>
</dbReference>
<dbReference type="NCBIfam" id="TIGR01355">
    <property type="entry name" value="cyt_deam_dimer"/>
    <property type="match status" value="1"/>
</dbReference>
<dbReference type="NCBIfam" id="NF006537">
    <property type="entry name" value="PRK09027.1"/>
    <property type="match status" value="1"/>
</dbReference>
<dbReference type="PANTHER" id="PTHR11644">
    <property type="entry name" value="CYTIDINE DEAMINASE"/>
    <property type="match status" value="1"/>
</dbReference>
<dbReference type="PANTHER" id="PTHR11644:SF2">
    <property type="entry name" value="CYTIDINE DEAMINASE"/>
    <property type="match status" value="1"/>
</dbReference>
<dbReference type="Pfam" id="PF00383">
    <property type="entry name" value="dCMP_cyt_deam_1"/>
    <property type="match status" value="1"/>
</dbReference>
<dbReference type="Pfam" id="PF08211">
    <property type="entry name" value="dCMP_cyt_deam_2"/>
    <property type="match status" value="1"/>
</dbReference>
<dbReference type="PIRSF" id="PIRSF006334">
    <property type="entry name" value="Cdd_plus_pseudo"/>
    <property type="match status" value="1"/>
</dbReference>
<dbReference type="SUPFAM" id="SSF53927">
    <property type="entry name" value="Cytidine deaminase-like"/>
    <property type="match status" value="2"/>
</dbReference>
<dbReference type="PROSITE" id="PS00903">
    <property type="entry name" value="CYT_DCMP_DEAMINASES_1"/>
    <property type="match status" value="1"/>
</dbReference>
<dbReference type="PROSITE" id="PS51747">
    <property type="entry name" value="CYT_DCMP_DEAMINASES_2"/>
    <property type="match status" value="2"/>
</dbReference>